<organism evidence="9">
    <name type="scientific">Arabidopsis thaliana</name>
    <name type="common">Mouse-ear cress</name>
    <dbReference type="NCBI Taxonomy" id="3702"/>
    <lineage>
        <taxon>Eukaryota</taxon>
        <taxon>Viridiplantae</taxon>
        <taxon>Streptophyta</taxon>
        <taxon>Embryophyta</taxon>
        <taxon>Tracheophyta</taxon>
        <taxon>Spermatophyta</taxon>
        <taxon>Magnoliopsida</taxon>
        <taxon>eudicotyledons</taxon>
        <taxon>Gunneridae</taxon>
        <taxon>Pentapetalae</taxon>
        <taxon>rosids</taxon>
        <taxon>malvids</taxon>
        <taxon>Brassicales</taxon>
        <taxon>Brassicaceae</taxon>
        <taxon>Camelineae</taxon>
        <taxon>Arabidopsis</taxon>
    </lineage>
</organism>
<feature type="chain" id="PRO_0000435316" description="Enhanced ethylene response protein 5">
    <location>
        <begin position="1"/>
        <end position="413"/>
    </location>
</feature>
<feature type="domain" description="PCI" evidence="1">
    <location>
        <begin position="216"/>
        <end position="402"/>
    </location>
</feature>
<feature type="mutagenesis site" description="In eer5-1; enhanced ethylene response." evidence="2">
    <original>G</original>
    <variation>E</variation>
    <location>
        <position position="152"/>
    </location>
</feature>
<gene>
    <name evidence="5" type="primary">EER5</name>
    <name evidence="6" type="synonym">ESSP1</name>
    <name evidence="6" type="synonym">THP1</name>
    <name evidence="8" type="ordered locus">At2g19560</name>
</gene>
<sequence length="413" mass="47614">MAYVSMGEAHRRITEYLNRFCDAVSYQDSSTLCRLLSFSSNSPPLLSLADALNVFQDSSSLIRQSDRFSEYGEILAHVFRSLQSYRVGNLVEAYLAFDKFANAFVQEFRNWESAWALEALYVVCYEIRVLAEKADKDLTSNGKSPEKLKAAGSLLMKVFGVLAGKGPKRVGALYVTCQLFKTYFKLGTVNLCRSVIRSIETARIFDFEEFPRRDKVTYMYYTGRLEVFNENFPAADTKLSYALQNCNPKRERNIRMILKYLVPVKLSLGIIPKDELLRNYNLHEYTKIVQALRKGDLRLLRHALQEHEDRFLRSGVYLVLEKLELQVYQRLMKKIYINQKLSDPARAHQLKLEGIAKALRWLDMDMDLDEVECIMTILIYKNLVKGYLAHKSKVVVLSKQDPFPKLNGKPVSS</sequence>
<dbReference type="EMBL" id="AC005917">
    <property type="protein sequence ID" value="AAD10155.1"/>
    <property type="status" value="ALT_SEQ"/>
    <property type="molecule type" value="Genomic_DNA"/>
</dbReference>
<dbReference type="EMBL" id="CP002685">
    <property type="protein sequence ID" value="AEC06895.1"/>
    <property type="molecule type" value="Genomic_DNA"/>
</dbReference>
<dbReference type="EMBL" id="AK118897">
    <property type="protein sequence ID" value="BAC43481.1"/>
    <property type="molecule type" value="mRNA"/>
</dbReference>
<dbReference type="PIR" id="C84578">
    <property type="entry name" value="C84578"/>
</dbReference>
<dbReference type="RefSeq" id="NP_179546.2">
    <property type="nucleotide sequence ID" value="NM_127514.4"/>
</dbReference>
<dbReference type="SMR" id="Q8GWE6"/>
<dbReference type="FunCoup" id="Q8GWE6">
    <property type="interactions" value="4211"/>
</dbReference>
<dbReference type="IntAct" id="Q8GWE6">
    <property type="interactions" value="7"/>
</dbReference>
<dbReference type="STRING" id="3702.Q8GWE6"/>
<dbReference type="iPTMnet" id="Q8GWE6"/>
<dbReference type="PaxDb" id="3702-AT2G19560.1"/>
<dbReference type="ProteomicsDB" id="224727"/>
<dbReference type="DNASU" id="816475"/>
<dbReference type="EnsemblPlants" id="AT2G19560.1">
    <property type="protein sequence ID" value="AT2G19560.1"/>
    <property type="gene ID" value="AT2G19560"/>
</dbReference>
<dbReference type="GeneID" id="816475"/>
<dbReference type="Gramene" id="AT2G19560.1">
    <property type="protein sequence ID" value="AT2G19560.1"/>
    <property type="gene ID" value="AT2G19560"/>
</dbReference>
<dbReference type="KEGG" id="ath:AT2G19560"/>
<dbReference type="Araport" id="AT2G19560"/>
<dbReference type="TAIR" id="AT2G19560">
    <property type="gene designation" value="EER5"/>
</dbReference>
<dbReference type="eggNOG" id="KOG2688">
    <property type="taxonomic scope" value="Eukaryota"/>
</dbReference>
<dbReference type="HOGENOM" id="CLU_031567_2_0_1"/>
<dbReference type="InParanoid" id="Q8GWE6"/>
<dbReference type="PhylomeDB" id="Q8GWE6"/>
<dbReference type="PRO" id="PR:Q8GWE6"/>
<dbReference type="Proteomes" id="UP000006548">
    <property type="component" value="Chromosome 2"/>
</dbReference>
<dbReference type="ExpressionAtlas" id="Q8GWE6">
    <property type="expression patterns" value="baseline and differential"/>
</dbReference>
<dbReference type="GO" id="GO:0005634">
    <property type="term" value="C:nucleus"/>
    <property type="evidence" value="ECO:0000314"/>
    <property type="project" value="TAIR"/>
</dbReference>
<dbReference type="GO" id="GO:0003690">
    <property type="term" value="F:double-stranded DNA binding"/>
    <property type="evidence" value="ECO:0007669"/>
    <property type="project" value="InterPro"/>
</dbReference>
<dbReference type="GO" id="GO:0003723">
    <property type="term" value="F:RNA binding"/>
    <property type="evidence" value="ECO:0007669"/>
    <property type="project" value="InterPro"/>
</dbReference>
<dbReference type="GO" id="GO:0009873">
    <property type="term" value="P:ethylene-activated signaling pathway"/>
    <property type="evidence" value="ECO:0000353"/>
    <property type="project" value="TAIR"/>
</dbReference>
<dbReference type="GO" id="GO:0016973">
    <property type="term" value="P:poly(A)+ mRNA export from nucleus"/>
    <property type="evidence" value="ECO:0000315"/>
    <property type="project" value="TAIR"/>
</dbReference>
<dbReference type="GO" id="GO:0009723">
    <property type="term" value="P:response to ethylene"/>
    <property type="evidence" value="ECO:0000315"/>
    <property type="project" value="TAIR"/>
</dbReference>
<dbReference type="GO" id="GO:0048364">
    <property type="term" value="P:root development"/>
    <property type="evidence" value="ECO:0000315"/>
    <property type="project" value="TAIR"/>
</dbReference>
<dbReference type="FunFam" id="1.10.10.10:FF:000333">
    <property type="entry name" value="enhanced ethylene response protein 5"/>
    <property type="match status" value="1"/>
</dbReference>
<dbReference type="Gene3D" id="1.10.10.10">
    <property type="entry name" value="Winged helix-like DNA-binding domain superfamily/Winged helix DNA-binding domain"/>
    <property type="match status" value="1"/>
</dbReference>
<dbReference type="InterPro" id="IPR045114">
    <property type="entry name" value="Csn12-like"/>
</dbReference>
<dbReference type="InterPro" id="IPR000717">
    <property type="entry name" value="PCI_dom"/>
</dbReference>
<dbReference type="InterPro" id="IPR036388">
    <property type="entry name" value="WH-like_DNA-bd_sf"/>
</dbReference>
<dbReference type="PANTHER" id="PTHR12732:SF0">
    <property type="entry name" value="PCI DOMAIN-CONTAINING PROTEIN 2"/>
    <property type="match status" value="1"/>
</dbReference>
<dbReference type="PANTHER" id="PTHR12732">
    <property type="entry name" value="UNCHARACTERIZED PROTEASOME COMPONENT REGION PCI-CONTAINING"/>
    <property type="match status" value="1"/>
</dbReference>
<dbReference type="Pfam" id="PF01399">
    <property type="entry name" value="PCI"/>
    <property type="match status" value="1"/>
</dbReference>
<dbReference type="SMART" id="SM00753">
    <property type="entry name" value="PAM"/>
    <property type="match status" value="1"/>
</dbReference>
<dbReference type="PROSITE" id="PS50250">
    <property type="entry name" value="PCI"/>
    <property type="match status" value="1"/>
</dbReference>
<keyword id="KW-0539">Nucleus</keyword>
<keyword id="KW-1185">Reference proteome</keyword>
<name>EER5_ARATH</name>
<comment type="function">
    <text evidence="2 3">Involved in the regulation of ethylene response (PubMed:18429939). Probable TREX-2 component required for nuclear RNA export. The TREX-2 complex (transcription and export complex 2) functions in docking export-competent ribonucleoprotein particles (mRNPs) to the nuclear entrance of the nuclear pore complex (nuclear basket). TREX-2 participates in mRNA export and accurate chromatin positioning in the nucleus by tethering genes to the nuclear periphery (PubMed:19843313).</text>
</comment>
<comment type="subunit">
    <text evidence="2 3 4">Interacts with EIN2 (via C-terminus). May also interact weakly with CSN8 (PubMed:18429939). Interacts with DSS1(V), AMPD, SAC3A, SAC3B and At5g61290 (AC Q9FLK4) (PubMed:19843313). Interacts with UCH1 (PubMed:19843313, PubMed:22951400) and UCH2 (PubMed:22951400). Interacts with NUP1, anchoring the TREX-2 complex on the nuclear pore complex (PubMed:19843313).</text>
</comment>
<comment type="interaction">
    <interactant intactId="EBI-2619706">
        <id>Q8GWE6</id>
    </interactant>
    <interactant intactId="EBI-2619711">
        <id>Q9CAF4</id>
        <label>NUP1</label>
    </interactant>
    <organismsDiffer>false</organismsDiffer>
    <experiments>3</experiments>
</comment>
<comment type="interaction">
    <interactant intactId="EBI-2619706">
        <id>Q8GWE6</id>
    </interactant>
    <interactant intactId="EBI-2619722">
        <id>F4IUY8</id>
        <label>SAC3A</label>
    </interactant>
    <organismsDiffer>false</organismsDiffer>
    <experiments>3</experiments>
</comment>
<comment type="subcellular location">
    <subcellularLocation>
        <location evidence="3">Nucleus</location>
    </subcellularLocation>
</comment>
<comment type="tissue specificity">
    <text evidence="2 3">Expressed at low levels in roots, leaves, stems and shoots (PubMed:18429939). Detected in seedlings, roots, leaves and anthers (PubMed:19843313).</text>
</comment>
<comment type="disruption phenotype">
    <text evidence="2 3">No visible phenotype, when grown in absence of ethylene. Extreme ethylene responsivness, when treated with saturating ethylene concentrations (PubMed:18429939). Curly leaf (PubMed:19843313).</text>
</comment>
<comment type="sequence caution" evidence="7">
    <conflict type="erroneous gene model prediction">
        <sequence resource="EMBL-CDS" id="AAD10155"/>
    </conflict>
</comment>
<proteinExistence type="evidence at protein level"/>
<protein>
    <recommendedName>
        <fullName evidence="5">Enhanced ethylene response protein 5</fullName>
    </recommendedName>
    <alternativeName>
        <fullName evidence="6">Nuclear mRNA export protein THP1</fullName>
        <shortName evidence="6">AtTHP1</shortName>
    </alternativeName>
</protein>
<accession>Q8GWE6</accession>
<accession>Q9ZUN6</accession>
<reference key="1">
    <citation type="journal article" date="1999" name="Nature">
        <title>Sequence and analysis of chromosome 2 of the plant Arabidopsis thaliana.</title>
        <authorList>
            <person name="Lin X."/>
            <person name="Kaul S."/>
            <person name="Rounsley S.D."/>
            <person name="Shea T.P."/>
            <person name="Benito M.-I."/>
            <person name="Town C.D."/>
            <person name="Fujii C.Y."/>
            <person name="Mason T.M."/>
            <person name="Bowman C.L."/>
            <person name="Barnstead M.E."/>
            <person name="Feldblyum T.V."/>
            <person name="Buell C.R."/>
            <person name="Ketchum K.A."/>
            <person name="Lee J.J."/>
            <person name="Ronning C.M."/>
            <person name="Koo H.L."/>
            <person name="Moffat K.S."/>
            <person name="Cronin L.A."/>
            <person name="Shen M."/>
            <person name="Pai G."/>
            <person name="Van Aken S."/>
            <person name="Umayam L."/>
            <person name="Tallon L.J."/>
            <person name="Gill J.E."/>
            <person name="Adams M.D."/>
            <person name="Carrera A.J."/>
            <person name="Creasy T.H."/>
            <person name="Goodman H.M."/>
            <person name="Somerville C.R."/>
            <person name="Copenhaver G.P."/>
            <person name="Preuss D."/>
            <person name="Nierman W.C."/>
            <person name="White O."/>
            <person name="Eisen J.A."/>
            <person name="Salzberg S.L."/>
            <person name="Fraser C.M."/>
            <person name="Venter J.C."/>
        </authorList>
    </citation>
    <scope>NUCLEOTIDE SEQUENCE [LARGE SCALE GENOMIC DNA]</scope>
    <source>
        <strain>cv. Columbia</strain>
    </source>
</reference>
<reference key="2">
    <citation type="journal article" date="2017" name="Plant J.">
        <title>Araport11: a complete reannotation of the Arabidopsis thaliana reference genome.</title>
        <authorList>
            <person name="Cheng C.Y."/>
            <person name="Krishnakumar V."/>
            <person name="Chan A.P."/>
            <person name="Thibaud-Nissen F."/>
            <person name="Schobel S."/>
            <person name="Town C.D."/>
        </authorList>
    </citation>
    <scope>GENOME REANNOTATION</scope>
    <source>
        <strain>cv. Columbia</strain>
    </source>
</reference>
<reference key="3">
    <citation type="journal article" date="2002" name="Science">
        <title>Functional annotation of a full-length Arabidopsis cDNA collection.</title>
        <authorList>
            <person name="Seki M."/>
            <person name="Narusaka M."/>
            <person name="Kamiya A."/>
            <person name="Ishida J."/>
            <person name="Satou M."/>
            <person name="Sakurai T."/>
            <person name="Nakajima M."/>
            <person name="Enju A."/>
            <person name="Akiyama K."/>
            <person name="Oono Y."/>
            <person name="Muramatsu M."/>
            <person name="Hayashizaki Y."/>
            <person name="Kawai J."/>
            <person name="Carninci P."/>
            <person name="Itoh M."/>
            <person name="Ishii Y."/>
            <person name="Arakawa T."/>
            <person name="Shibata K."/>
            <person name="Shinagawa A."/>
            <person name="Shinozaki K."/>
        </authorList>
    </citation>
    <scope>NUCLEOTIDE SEQUENCE [LARGE SCALE MRNA]</scope>
    <source>
        <strain>cv. Columbia</strain>
    </source>
</reference>
<reference key="4">
    <citation type="journal article" date="2008" name="Plant J.">
        <title>The eer5 mutation, which affects a novel proteasome-related subunit, indicates a prominent role for the COP9 signalosome in resetting the ethylene-signaling pathway in Arabidopsis.</title>
        <authorList>
            <person name="Christians M.J."/>
            <person name="Robles L.M."/>
            <person name="Zeller S.M."/>
            <person name="Larsen P.B."/>
        </authorList>
    </citation>
    <scope>FUNCTION</scope>
    <scope>MUTAGENESIS OF GLY-152</scope>
    <scope>TISSUE SPECIFICITY</scope>
    <scope>DISRUPTION PHENOTYPE</scope>
    <scope>INTERACTION WITH EIN2 AND CSN8</scope>
</reference>
<reference key="5">
    <citation type="journal article" date="2010" name="Plant J.">
        <title>Arabidopsis homolog of the yeast TREX-2 mRNA export complex: components and anchoring nucleoporin.</title>
        <authorList>
            <person name="Lu Q."/>
            <person name="Tang X."/>
            <person name="Tian G."/>
            <person name="Wang F."/>
            <person name="Liu K."/>
            <person name="Nguyen V."/>
            <person name="Kohalmi S.E."/>
            <person name="Keller W.A."/>
            <person name="Tsang E.W."/>
            <person name="Harada J.J."/>
            <person name="Rothstein S.J."/>
            <person name="Cui Y."/>
        </authorList>
    </citation>
    <scope>FUNCTION</scope>
    <scope>DISRUPTION PHENOTYPE</scope>
    <scope>TISSUE SPECIFICITY</scope>
    <scope>SUBCELLULAR LOCATION</scope>
    <scope>INTERACTION WITH NUP1; DSS1(V); AMPD; SAC3A; SAC3B; UCH1 AND AT5G61290</scope>
</reference>
<reference key="6">
    <citation type="journal article" date="2012" name="Plant Signal. Behav.">
        <title>Evidence that the Arabidopsis Ubiquitin C-terminal Hydrolases 1 and 2 associate with the 26S proteasome and the TREX-2 complex.</title>
        <authorList>
            <person name="Tian G."/>
            <person name="Lu Q."/>
            <person name="Kohalmi S.E."/>
            <person name="Rothstein S.J."/>
            <person name="Cui Y."/>
        </authorList>
    </citation>
    <scope>INTERACTION WITH UCH1 AND UCH2</scope>
</reference>
<evidence type="ECO:0000255" key="1">
    <source>
        <dbReference type="PROSITE-ProRule" id="PRU01185"/>
    </source>
</evidence>
<evidence type="ECO:0000269" key="2">
    <source>
    </source>
</evidence>
<evidence type="ECO:0000269" key="3">
    <source>
    </source>
</evidence>
<evidence type="ECO:0000269" key="4">
    <source>
    </source>
</evidence>
<evidence type="ECO:0000303" key="5">
    <source>
    </source>
</evidence>
<evidence type="ECO:0000303" key="6">
    <source>
    </source>
</evidence>
<evidence type="ECO:0000305" key="7"/>
<evidence type="ECO:0000312" key="8">
    <source>
        <dbReference type="Araport" id="AT2G19560"/>
    </source>
</evidence>
<evidence type="ECO:0000312" key="9">
    <source>
        <dbReference type="EMBL" id="BAC43481.1"/>
    </source>
</evidence>